<protein>
    <recommendedName>
        <fullName>B3 domain-containing protein REM12</fullName>
    </recommendedName>
    <alternativeName>
        <fullName>Protein REPRODUCTIVE MERISTEM 12</fullName>
    </alternativeName>
</protein>
<sequence>MVLNSSDLGPSRCDIRDLPAPSSTNDQGKTELARKKKVKRSNTEIEADASSSDNSCFVALVTASNLRKDALYLPQDLTSSVGLERKYREIVVTDERERRSWALDLRFNKSSDTFYISRGWRSFCDENGKKPGGVFVFKLVGNRETPVLSFCSTESINDGTQGHKNNKYNCMELKSKKKRMRCRDSTSPSQNRFMTLTLTHDNLIKSRRYLPLSFTRDNGLDKPGMIFLLGKTGRKWEANLLREASGRIVLTGKGWKEFAMANGLKSGELFTLEAILEKGTPMLSLVNTQSTNYRSQQGECSRDSEKESSICAEPSRGNKKWKATNNRKERRDSSSAIQNRYVTLTLTPEDVRACTLILPSQFMKANGINKLGKKTLLGQNRKKWFAYLLSKSGFVALGSGWKGFCEANGVKTGESFNLEYIDEQDTTPVFKFCSNSVEYVKFTSLP</sequence>
<name>REM12_ARATH</name>
<gene>
    <name type="primary">REM12</name>
    <name type="ordered locus">At2g24680</name>
    <name type="ORF">F25P17.2</name>
</gene>
<keyword id="KW-0025">Alternative splicing</keyword>
<keyword id="KW-0238">DNA-binding</keyword>
<keyword id="KW-0539">Nucleus</keyword>
<keyword id="KW-1185">Reference proteome</keyword>
<keyword id="KW-0677">Repeat</keyword>
<keyword id="KW-0804">Transcription</keyword>
<keyword id="KW-0805">Transcription regulation</keyword>
<reference key="1">
    <citation type="journal article" date="1999" name="Nature">
        <title>Sequence and analysis of chromosome 2 of the plant Arabidopsis thaliana.</title>
        <authorList>
            <person name="Lin X."/>
            <person name="Kaul S."/>
            <person name="Rounsley S.D."/>
            <person name="Shea T.P."/>
            <person name="Benito M.-I."/>
            <person name="Town C.D."/>
            <person name="Fujii C.Y."/>
            <person name="Mason T.M."/>
            <person name="Bowman C.L."/>
            <person name="Barnstead M.E."/>
            <person name="Feldblyum T.V."/>
            <person name="Buell C.R."/>
            <person name="Ketchum K.A."/>
            <person name="Lee J.J."/>
            <person name="Ronning C.M."/>
            <person name="Koo H.L."/>
            <person name="Moffat K.S."/>
            <person name="Cronin L.A."/>
            <person name="Shen M."/>
            <person name="Pai G."/>
            <person name="Van Aken S."/>
            <person name="Umayam L."/>
            <person name="Tallon L.J."/>
            <person name="Gill J.E."/>
            <person name="Adams M.D."/>
            <person name="Carrera A.J."/>
            <person name="Creasy T.H."/>
            <person name="Goodman H.M."/>
            <person name="Somerville C.R."/>
            <person name="Copenhaver G.P."/>
            <person name="Preuss D."/>
            <person name="Nierman W.C."/>
            <person name="White O."/>
            <person name="Eisen J.A."/>
            <person name="Salzberg S.L."/>
            <person name="Fraser C.M."/>
            <person name="Venter J.C."/>
        </authorList>
    </citation>
    <scope>NUCLEOTIDE SEQUENCE [LARGE SCALE GENOMIC DNA]</scope>
    <source>
        <strain>cv. Columbia</strain>
    </source>
</reference>
<reference key="2">
    <citation type="journal article" date="2017" name="Plant J.">
        <title>Araport11: a complete reannotation of the Arabidopsis thaliana reference genome.</title>
        <authorList>
            <person name="Cheng C.Y."/>
            <person name="Krishnakumar V."/>
            <person name="Chan A.P."/>
            <person name="Thibaud-Nissen F."/>
            <person name="Schobel S."/>
            <person name="Town C.D."/>
        </authorList>
    </citation>
    <scope>GENOME REANNOTATION</scope>
    <source>
        <strain>cv. Columbia</strain>
    </source>
</reference>
<reference key="3">
    <citation type="journal article" date="2004" name="Genome Res.">
        <title>Whole genome sequence comparisons and 'full-length' cDNA sequences: a combined approach to evaluate and improve Arabidopsis genome annotation.</title>
        <authorList>
            <person name="Castelli V."/>
            <person name="Aury J.-M."/>
            <person name="Jaillon O."/>
            <person name="Wincker P."/>
            <person name="Clepet C."/>
            <person name="Menard M."/>
            <person name="Cruaud C."/>
            <person name="Quetier F."/>
            <person name="Scarpelli C."/>
            <person name="Schaechter V."/>
            <person name="Temple G."/>
            <person name="Caboche M."/>
            <person name="Weissenbach J."/>
            <person name="Salanoubat M."/>
        </authorList>
    </citation>
    <scope>NUCLEOTIDE SEQUENCE [LARGE SCALE MRNA]</scope>
    <source>
        <strain>cv. Columbia</strain>
    </source>
</reference>
<reference key="4">
    <citation type="journal article" date="2008" name="Trends Plant Sci.">
        <title>The plant B3 superfamily.</title>
        <authorList>
            <person name="Swaminathan K."/>
            <person name="Peterson K."/>
            <person name="Jack T."/>
        </authorList>
    </citation>
    <scope>GENE FAMILY</scope>
</reference>
<organism>
    <name type="scientific">Arabidopsis thaliana</name>
    <name type="common">Mouse-ear cress</name>
    <dbReference type="NCBI Taxonomy" id="3702"/>
    <lineage>
        <taxon>Eukaryota</taxon>
        <taxon>Viridiplantae</taxon>
        <taxon>Streptophyta</taxon>
        <taxon>Embryophyta</taxon>
        <taxon>Tracheophyta</taxon>
        <taxon>Spermatophyta</taxon>
        <taxon>Magnoliopsida</taxon>
        <taxon>eudicotyledons</taxon>
        <taxon>Gunneridae</taxon>
        <taxon>Pentapetalae</taxon>
        <taxon>rosids</taxon>
        <taxon>malvids</taxon>
        <taxon>Brassicales</taxon>
        <taxon>Brassicaceae</taxon>
        <taxon>Camelineae</taxon>
        <taxon>Arabidopsis</taxon>
    </lineage>
</organism>
<proteinExistence type="evidence at transcript level"/>
<dbReference type="EMBL" id="AC006954">
    <property type="protein sequence ID" value="AAD23881.1"/>
    <property type="status" value="ALT_SEQ"/>
    <property type="molecule type" value="Genomic_DNA"/>
</dbReference>
<dbReference type="EMBL" id="CP002685">
    <property type="protein sequence ID" value="AEC07612.1"/>
    <property type="molecule type" value="Genomic_DNA"/>
</dbReference>
<dbReference type="EMBL" id="BX819661">
    <property type="status" value="NOT_ANNOTATED_CDS"/>
    <property type="molecule type" value="mRNA"/>
</dbReference>
<dbReference type="PIR" id="F84639">
    <property type="entry name" value="F84639"/>
</dbReference>
<dbReference type="RefSeq" id="NP_180044.2">
    <molecule id="P0CAP4-1"/>
    <property type="nucleotide sequence ID" value="NM_128029.2"/>
</dbReference>
<dbReference type="SMR" id="P0CAP4"/>
<dbReference type="FunCoup" id="P0CAP4">
    <property type="interactions" value="7"/>
</dbReference>
<dbReference type="STRING" id="3702.P0CAP4"/>
<dbReference type="PaxDb" id="3702-AT2G24680.2"/>
<dbReference type="EnsemblPlants" id="AT2G24680.1">
    <molecule id="P0CAP4-1"/>
    <property type="protein sequence ID" value="AT2G24680.1"/>
    <property type="gene ID" value="AT2G24680"/>
</dbReference>
<dbReference type="GeneID" id="817004"/>
<dbReference type="Gramene" id="AT2G24680.1">
    <molecule id="P0CAP4-1"/>
    <property type="protein sequence ID" value="AT2G24680.1"/>
    <property type="gene ID" value="AT2G24680"/>
</dbReference>
<dbReference type="KEGG" id="ath:AT2G24680"/>
<dbReference type="Araport" id="AT2G24680"/>
<dbReference type="TAIR" id="AT2G24680"/>
<dbReference type="HOGENOM" id="CLU_014437_3_0_1"/>
<dbReference type="InParanoid" id="P0CAP4"/>
<dbReference type="PhylomeDB" id="P0CAP4"/>
<dbReference type="PRO" id="PR:P0CAP4"/>
<dbReference type="Proteomes" id="UP000006548">
    <property type="component" value="Chromosome 2"/>
</dbReference>
<dbReference type="ExpressionAtlas" id="P0CAP4">
    <property type="expression patterns" value="baseline and differential"/>
</dbReference>
<dbReference type="GO" id="GO:0005634">
    <property type="term" value="C:nucleus"/>
    <property type="evidence" value="ECO:0007669"/>
    <property type="project" value="UniProtKB-SubCell"/>
</dbReference>
<dbReference type="GO" id="GO:0003677">
    <property type="term" value="F:DNA binding"/>
    <property type="evidence" value="ECO:0007669"/>
    <property type="project" value="UniProtKB-KW"/>
</dbReference>
<dbReference type="CDD" id="cd10017">
    <property type="entry name" value="B3_DNA"/>
    <property type="match status" value="3"/>
</dbReference>
<dbReference type="Gene3D" id="2.40.330.10">
    <property type="entry name" value="DNA-binding pseudobarrel domain"/>
    <property type="match status" value="3"/>
</dbReference>
<dbReference type="InterPro" id="IPR003340">
    <property type="entry name" value="B3_DNA-bd"/>
</dbReference>
<dbReference type="InterPro" id="IPR015300">
    <property type="entry name" value="DNA-bd_pseudobarrel_sf"/>
</dbReference>
<dbReference type="InterPro" id="IPR039218">
    <property type="entry name" value="REM_fam"/>
</dbReference>
<dbReference type="PANTHER" id="PTHR31674:SF41">
    <property type="entry name" value="B3 DOMAIN-CONTAINING PROTEIN REM-LIKE 1-RELATED"/>
    <property type="match status" value="1"/>
</dbReference>
<dbReference type="PANTHER" id="PTHR31674">
    <property type="entry name" value="B3 DOMAIN-CONTAINING PROTEIN REM-LIKE 3-RELATED"/>
    <property type="match status" value="1"/>
</dbReference>
<dbReference type="Pfam" id="PF02362">
    <property type="entry name" value="B3"/>
    <property type="match status" value="3"/>
</dbReference>
<dbReference type="SMART" id="SM01019">
    <property type="entry name" value="B3"/>
    <property type="match status" value="3"/>
</dbReference>
<dbReference type="SUPFAM" id="SSF101936">
    <property type="entry name" value="DNA-binding pseudobarrel domain"/>
    <property type="match status" value="3"/>
</dbReference>
<dbReference type="PROSITE" id="PS50863">
    <property type="entry name" value="B3"/>
    <property type="match status" value="3"/>
</dbReference>
<evidence type="ECO:0000255" key="1">
    <source>
        <dbReference type="PROSITE-ProRule" id="PRU00326"/>
    </source>
</evidence>
<evidence type="ECO:0000256" key="2">
    <source>
        <dbReference type="SAM" id="MobiDB-lite"/>
    </source>
</evidence>
<evidence type="ECO:0000305" key="3"/>
<feature type="chain" id="PRO_0000375106" description="B3 domain-containing protein REM12">
    <location>
        <begin position="1"/>
        <end position="446"/>
    </location>
</feature>
<feature type="DNA-binding region" description="TF-B3 1" evidence="1">
    <location>
        <begin position="56"/>
        <end position="153"/>
    </location>
</feature>
<feature type="DNA-binding region" description="TF-B3 2" evidence="1">
    <location>
        <begin position="193"/>
        <end position="289"/>
    </location>
</feature>
<feature type="DNA-binding region" description="TF-B3 3" evidence="1">
    <location>
        <begin position="341"/>
        <end position="435"/>
    </location>
</feature>
<feature type="region of interest" description="Disordered" evidence="2">
    <location>
        <begin position="1"/>
        <end position="46"/>
    </location>
</feature>
<feature type="region of interest" description="Disordered" evidence="2">
    <location>
        <begin position="295"/>
        <end position="334"/>
    </location>
</feature>
<comment type="subcellular location">
    <subcellularLocation>
        <location evidence="1">Nucleus</location>
    </subcellularLocation>
</comment>
<comment type="alternative products">
    <event type="alternative splicing"/>
    <isoform>
        <id>P0CAP4-1</id>
        <name>1</name>
        <sequence type="displayed"/>
    </isoform>
    <text>A number of isoforms are produced. According to EST sequences.</text>
</comment>
<comment type="sequence caution" evidence="3">
    <conflict type="erroneous gene model prediction">
        <sequence resource="EMBL-CDS" id="AAD23881"/>
    </conflict>
    <text>The predicted gene At2g24680 has been split into 2 genes: At2g24680 and At2g24681.</text>
</comment>
<comment type="sequence caution" evidence="3">
    <conflict type="miscellaneous discrepancy">
        <sequence resource="EMBL" id="BX819661"/>
    </conflict>
    <text>Sequencing errors.</text>
</comment>
<accession>P0CAP4</accession>
<accession>Q9SJ97</accession>